<keyword id="KW-0963">Cytoplasm</keyword>
<keyword id="KW-0206">Cytoskeleton</keyword>
<keyword id="KW-0217">Developmental protein</keyword>
<keyword id="KW-0221">Differentiation</keyword>
<keyword id="KW-0903">Direct protein sequencing</keyword>
<keyword id="KW-1185">Reference proteome</keyword>
<keyword id="KW-0677">Repeat</keyword>
<keyword id="KW-0744">Spermatogenesis</keyword>
<name>CYLC1_BOVIN</name>
<feature type="chain" id="PRO_0000079752" description="Cylicin-1">
    <location>
        <begin position="1"/>
        <end position="667"/>
    </location>
</feature>
<feature type="repeat" description="1">
    <location>
        <begin position="287"/>
        <end position="305"/>
    </location>
</feature>
<feature type="repeat" description="2">
    <location>
        <begin position="306"/>
        <end position="337"/>
    </location>
</feature>
<feature type="repeat" description="3">
    <location>
        <begin position="338"/>
        <end position="368"/>
    </location>
</feature>
<feature type="repeat" description="4">
    <location>
        <begin position="369"/>
        <end position="405"/>
    </location>
</feature>
<feature type="repeat" description="5">
    <location>
        <begin position="406"/>
        <end position="442"/>
    </location>
</feature>
<feature type="repeat" description="6">
    <location>
        <begin position="443"/>
        <end position="475"/>
    </location>
</feature>
<feature type="repeat" description="7">
    <location>
        <begin position="476"/>
        <end position="516"/>
    </location>
</feature>
<feature type="repeat" description="8">
    <location>
        <begin position="517"/>
        <end position="547"/>
    </location>
</feature>
<feature type="repeat" description="9">
    <location>
        <begin position="548"/>
        <end position="569"/>
    </location>
</feature>
<feature type="region of interest" description="Disordered" evidence="3">
    <location>
        <begin position="121"/>
        <end position="251"/>
    </location>
</feature>
<feature type="region of interest" description="Disordered" evidence="3">
    <location>
        <begin position="275"/>
        <end position="634"/>
    </location>
</feature>
<feature type="region of interest" description="9 X approximate tandem repeats">
    <location>
        <begin position="287"/>
        <end position="569"/>
    </location>
</feature>
<feature type="compositionally biased region" description="Basic and acidic residues" evidence="3">
    <location>
        <begin position="129"/>
        <end position="172"/>
    </location>
</feature>
<feature type="compositionally biased region" description="Low complexity" evidence="3">
    <location>
        <begin position="173"/>
        <end position="182"/>
    </location>
</feature>
<feature type="compositionally biased region" description="Basic and acidic residues" evidence="3">
    <location>
        <begin position="187"/>
        <end position="197"/>
    </location>
</feature>
<feature type="compositionally biased region" description="Low complexity" evidence="3">
    <location>
        <begin position="223"/>
        <end position="237"/>
    </location>
</feature>
<feature type="compositionally biased region" description="Polar residues" evidence="3">
    <location>
        <begin position="238"/>
        <end position="251"/>
    </location>
</feature>
<feature type="compositionally biased region" description="Basic and acidic residues" evidence="3">
    <location>
        <begin position="284"/>
        <end position="326"/>
    </location>
</feature>
<feature type="compositionally biased region" description="Basic and acidic residues" evidence="3">
    <location>
        <begin position="345"/>
        <end position="371"/>
    </location>
</feature>
<feature type="compositionally biased region" description="Basic and acidic residues" evidence="3">
    <location>
        <begin position="380"/>
        <end position="394"/>
    </location>
</feature>
<feature type="compositionally biased region" description="Basic and acidic residues" evidence="3">
    <location>
        <begin position="417"/>
        <end position="431"/>
    </location>
</feature>
<feature type="compositionally biased region" description="Basic and acidic residues" evidence="3">
    <location>
        <begin position="438"/>
        <end position="464"/>
    </location>
</feature>
<feature type="compositionally biased region" description="Basic and acidic residues" evidence="3">
    <location>
        <begin position="483"/>
        <end position="506"/>
    </location>
</feature>
<feature type="compositionally biased region" description="Basic and acidic residues" evidence="3">
    <location>
        <begin position="521"/>
        <end position="533"/>
    </location>
</feature>
<feature type="compositionally biased region" description="Basic and acidic residues" evidence="3">
    <location>
        <begin position="549"/>
        <end position="558"/>
    </location>
</feature>
<feature type="compositionally biased region" description="Basic and acidic residues" evidence="3">
    <location>
        <begin position="583"/>
        <end position="593"/>
    </location>
</feature>
<feature type="compositionally biased region" description="Pro residues" evidence="3">
    <location>
        <begin position="624"/>
        <end position="633"/>
    </location>
</feature>
<proteinExistence type="evidence at protein level"/>
<organism>
    <name type="scientific">Bos taurus</name>
    <name type="common">Bovine</name>
    <dbReference type="NCBI Taxonomy" id="9913"/>
    <lineage>
        <taxon>Eukaryota</taxon>
        <taxon>Metazoa</taxon>
        <taxon>Chordata</taxon>
        <taxon>Craniata</taxon>
        <taxon>Vertebrata</taxon>
        <taxon>Euteleostomi</taxon>
        <taxon>Mammalia</taxon>
        <taxon>Eutheria</taxon>
        <taxon>Laurasiatheria</taxon>
        <taxon>Artiodactyla</taxon>
        <taxon>Ruminantia</taxon>
        <taxon>Pecora</taxon>
        <taxon>Bovidae</taxon>
        <taxon>Bovinae</taxon>
        <taxon>Bos</taxon>
    </lineage>
</organism>
<gene>
    <name type="primary">CYLC1</name>
    <name type="synonym">CYL</name>
    <name type="synonym">CYL1</name>
</gene>
<comment type="function">
    <text evidence="1">Plays a role in the establishment of normal sperm morphology during spermatogenesis and is required for acrosome attachment to the nuclear envelope.</text>
</comment>
<comment type="subunit">
    <text evidence="2">Interacts with proteins of spermatozoa head including ACTL7A, CCIN, FAM209A and SPACA1; the interactions may be necessary for proper acrosome attachment to the nuclear envelope.</text>
</comment>
<comment type="subcellular location">
    <subcellularLocation>
        <location evidence="4">Cytoplasm</location>
        <location evidence="4">Cytoskeleton</location>
        <location evidence="4">Perinuclear theca</location>
        <location evidence="4">Calyx</location>
    </subcellularLocation>
    <subcellularLocation>
        <location evidence="1">Cytoplasm</location>
        <location evidence="1">Cytoskeleton</location>
        <location evidence="1">Perinuclear theca</location>
    </subcellularLocation>
    <text evidence="1">Localizes to the subacrosomal layer of the perinuclear theca in round and elongating spermatids. Localizes to the calyx, also known as post-acrosomal region, in spermatozoa.</text>
</comment>
<comment type="tissue specificity">
    <text evidence="4">Testis.</text>
</comment>
<evidence type="ECO:0000250" key="1">
    <source>
        <dbReference type="UniProtKB" id="A0A1B0GR13"/>
    </source>
</evidence>
<evidence type="ECO:0000250" key="2">
    <source>
        <dbReference type="UniProtKB" id="P35663"/>
    </source>
</evidence>
<evidence type="ECO:0000256" key="3">
    <source>
        <dbReference type="SAM" id="MobiDB-lite"/>
    </source>
</evidence>
<evidence type="ECO:0000269" key="4">
    <source>
    </source>
</evidence>
<reference key="1">
    <citation type="journal article" date="1993" name="J. Cell Biol.">
        <title>Molecular characterization of mammalian cylicin, a basic protein of the sperm head cytoskeleton.</title>
        <authorList>
            <person name="Hess H."/>
            <person name="Heid H."/>
            <person name="Franke W.W."/>
        </authorList>
    </citation>
    <scope>NUCLEOTIDE SEQUENCE [MRNA]</scope>
    <scope>PARTIAL PROTEIN SEQUENCE</scope>
    <scope>TISSUE SPECIFICITY</scope>
    <scope>SUBCELLULAR LOCATION</scope>
    <source>
        <tissue>Testis</tissue>
    </source>
</reference>
<dbReference type="EMBL" id="Z22779">
    <property type="protein sequence ID" value="CAA80456.1"/>
    <property type="molecule type" value="mRNA"/>
</dbReference>
<dbReference type="PIR" id="A40713">
    <property type="entry name" value="A40713"/>
</dbReference>
<dbReference type="RefSeq" id="NP_776727.1">
    <property type="nucleotide sequence ID" value="NM_174302.3"/>
</dbReference>
<dbReference type="STRING" id="9913.ENSBTAP00000054504"/>
<dbReference type="PaxDb" id="9913-ENSBTAP00000054504"/>
<dbReference type="GeneID" id="281737"/>
<dbReference type="KEGG" id="bta:281737"/>
<dbReference type="CTD" id="1538"/>
<dbReference type="eggNOG" id="ENOG502RFCV">
    <property type="taxonomic scope" value="Eukaryota"/>
</dbReference>
<dbReference type="InParanoid" id="P35662"/>
<dbReference type="OrthoDB" id="9838461at2759"/>
<dbReference type="Proteomes" id="UP000009136">
    <property type="component" value="Unplaced"/>
</dbReference>
<dbReference type="GO" id="GO:0043159">
    <property type="term" value="C:acrosomal matrix"/>
    <property type="evidence" value="ECO:0000250"/>
    <property type="project" value="UniProtKB"/>
</dbReference>
<dbReference type="GO" id="GO:0033150">
    <property type="term" value="C:cytoskeletal calyx"/>
    <property type="evidence" value="ECO:0000314"/>
    <property type="project" value="UniProtKB"/>
</dbReference>
<dbReference type="GO" id="GO:0061827">
    <property type="term" value="C:sperm head"/>
    <property type="evidence" value="ECO:0000250"/>
    <property type="project" value="UniProtKB"/>
</dbReference>
<dbReference type="GO" id="GO:0005200">
    <property type="term" value="F:structural constituent of cytoskeleton"/>
    <property type="evidence" value="ECO:0007669"/>
    <property type="project" value="InterPro"/>
</dbReference>
<dbReference type="GO" id="GO:0001675">
    <property type="term" value="P:acrosome assembly"/>
    <property type="evidence" value="ECO:0000250"/>
    <property type="project" value="UniProtKB"/>
</dbReference>
<dbReference type="GO" id="GO:0007283">
    <property type="term" value="P:spermatogenesis"/>
    <property type="evidence" value="ECO:0000250"/>
    <property type="project" value="UniProtKB"/>
</dbReference>
<dbReference type="InterPro" id="IPR026189">
    <property type="entry name" value="CYLC"/>
</dbReference>
<dbReference type="InterPro" id="IPR029354">
    <property type="entry name" value="Cylicin_N"/>
</dbReference>
<dbReference type="PANTHER" id="PTHR16742">
    <property type="entry name" value="CYCLICIN"/>
    <property type="match status" value="1"/>
</dbReference>
<dbReference type="PANTHER" id="PTHR16742:SF1">
    <property type="entry name" value="CYLICIN-1"/>
    <property type="match status" value="1"/>
</dbReference>
<dbReference type="Pfam" id="PF15241">
    <property type="entry name" value="Cylicin_N"/>
    <property type="match status" value="1"/>
</dbReference>
<sequence>MSLPRLCLGELINEDIHTWNSLCRQEITIKTYDNSIPISESSKKIRNQQYLTITFPKSSQPGGNKRLRPSEIQVTVPRHDKRNLDELQKPAHIWIRHSLRKKFQSPSINLIVRRQASFRHPYTHITHSKKAESKKYKDDKKETALKKISKKDTGPHEVDEKPKRRNKADKTPSKSSHGSQLSKKSKSKSETNPESKDSISVSIKHQKKEKRYSKDSKEMDFESTSTKKYSKSSKNNSDAVSETCSKNSSNVGLMVHLGESDAESMEFDMWLKNYSQNNSKKPTKKDAKKDAKGKGSDAESVDSKDAKKDKKGATKDTKKGAKKDTESTDAESGDSKDAKKGKKESKKDKKKDAKKDAASDAESGDSKDAKKDSKKGKKDSKKDNKKKDAKKDAESTDAESGDSKDAKKDSKKGKKDSKKDDKKKDAKKDAESTDAESGDSKNAKKDSKKGKKDDKKKDAKKDAVSTDADSESEGDAKKSKKDSKKDKKDLKKDDQKKPAMKSKESTETESDWESKKVKRDSKKDTKKTAKKATESSGAESDVSSKRYLKKTEMFKSSDAESEESLFKPGSKKRVDESDATSTDSKKDAVEPKRGIKMPSRRTTFKEKGKKIGTGRVPPSRERPPLPPCEPILPSPRVKRLCRCQMPPPPPKPRYAPLPEAKWIHKLL</sequence>
<protein>
    <recommendedName>
        <fullName>Cylicin-1</fullName>
    </recommendedName>
    <alternativeName>
        <fullName>Cylicin I</fullName>
    </alternativeName>
    <alternativeName>
        <fullName>Multiple-band polypeptide I</fullName>
    </alternativeName>
</protein>
<accession>P35662</accession>